<dbReference type="EC" id="1.18.1.2" evidence="1"/>
<dbReference type="EMBL" id="CP000250">
    <property type="protein sequence ID" value="ABD08534.1"/>
    <property type="molecule type" value="Genomic_DNA"/>
</dbReference>
<dbReference type="RefSeq" id="WP_011442718.1">
    <property type="nucleotide sequence ID" value="NC_007778.1"/>
</dbReference>
<dbReference type="SMR" id="Q2ITC6"/>
<dbReference type="STRING" id="316058.RPB_3841"/>
<dbReference type="KEGG" id="rpb:RPB_3841"/>
<dbReference type="eggNOG" id="COG0492">
    <property type="taxonomic scope" value="Bacteria"/>
</dbReference>
<dbReference type="HOGENOM" id="CLU_031864_5_5_5"/>
<dbReference type="OrthoDB" id="9806179at2"/>
<dbReference type="Proteomes" id="UP000008809">
    <property type="component" value="Chromosome"/>
</dbReference>
<dbReference type="GO" id="GO:0004324">
    <property type="term" value="F:ferredoxin-NADP+ reductase activity"/>
    <property type="evidence" value="ECO:0007669"/>
    <property type="project" value="UniProtKB-UniRule"/>
</dbReference>
<dbReference type="GO" id="GO:0050660">
    <property type="term" value="F:flavin adenine dinucleotide binding"/>
    <property type="evidence" value="ECO:0007669"/>
    <property type="project" value="UniProtKB-UniRule"/>
</dbReference>
<dbReference type="GO" id="GO:0050661">
    <property type="term" value="F:NADP binding"/>
    <property type="evidence" value="ECO:0007669"/>
    <property type="project" value="UniProtKB-UniRule"/>
</dbReference>
<dbReference type="Gene3D" id="3.50.50.60">
    <property type="entry name" value="FAD/NAD(P)-binding domain"/>
    <property type="match status" value="2"/>
</dbReference>
<dbReference type="HAMAP" id="MF_01685">
    <property type="entry name" value="FENR2"/>
    <property type="match status" value="1"/>
</dbReference>
<dbReference type="InterPro" id="IPR036188">
    <property type="entry name" value="FAD/NAD-bd_sf"/>
</dbReference>
<dbReference type="InterPro" id="IPR023753">
    <property type="entry name" value="FAD/NAD-binding_dom"/>
</dbReference>
<dbReference type="InterPro" id="IPR022890">
    <property type="entry name" value="Fd--NADP_Rdtase_type_2"/>
</dbReference>
<dbReference type="InterPro" id="IPR050097">
    <property type="entry name" value="Ferredoxin-NADP_redctase_2"/>
</dbReference>
<dbReference type="PANTHER" id="PTHR48105">
    <property type="entry name" value="THIOREDOXIN REDUCTASE 1-RELATED-RELATED"/>
    <property type="match status" value="1"/>
</dbReference>
<dbReference type="Pfam" id="PF07992">
    <property type="entry name" value="Pyr_redox_2"/>
    <property type="match status" value="1"/>
</dbReference>
<dbReference type="PRINTS" id="PR00368">
    <property type="entry name" value="FADPNR"/>
</dbReference>
<dbReference type="PRINTS" id="PR00469">
    <property type="entry name" value="PNDRDTASEII"/>
</dbReference>
<dbReference type="SUPFAM" id="SSF51905">
    <property type="entry name" value="FAD/NAD(P)-binding domain"/>
    <property type="match status" value="2"/>
</dbReference>
<comment type="catalytic activity">
    <reaction evidence="1">
        <text>2 reduced [2Fe-2S]-[ferredoxin] + NADP(+) + H(+) = 2 oxidized [2Fe-2S]-[ferredoxin] + NADPH</text>
        <dbReference type="Rhea" id="RHEA:20125"/>
        <dbReference type="Rhea" id="RHEA-COMP:10000"/>
        <dbReference type="Rhea" id="RHEA-COMP:10001"/>
        <dbReference type="ChEBI" id="CHEBI:15378"/>
        <dbReference type="ChEBI" id="CHEBI:33737"/>
        <dbReference type="ChEBI" id="CHEBI:33738"/>
        <dbReference type="ChEBI" id="CHEBI:57783"/>
        <dbReference type="ChEBI" id="CHEBI:58349"/>
        <dbReference type="EC" id="1.18.1.2"/>
    </reaction>
</comment>
<comment type="cofactor">
    <cofactor evidence="1">
        <name>FAD</name>
        <dbReference type="ChEBI" id="CHEBI:57692"/>
    </cofactor>
    <text evidence="1">Binds 1 FAD per subunit.</text>
</comment>
<comment type="subunit">
    <text evidence="1">Homodimer.</text>
</comment>
<comment type="similarity">
    <text evidence="1">Belongs to the ferredoxin--NADP reductase type 2 family.</text>
</comment>
<protein>
    <recommendedName>
        <fullName evidence="1">Ferredoxin--NADP reductase</fullName>
        <shortName evidence="1">FNR</shortName>
        <shortName evidence="1">Fd-NADP(+) reductase</shortName>
        <ecNumber evidence="1">1.18.1.2</ecNumber>
    </recommendedName>
</protein>
<keyword id="KW-0274">FAD</keyword>
<keyword id="KW-0285">Flavoprotein</keyword>
<keyword id="KW-0521">NADP</keyword>
<keyword id="KW-0560">Oxidoreductase</keyword>
<keyword id="KW-1185">Reference proteome</keyword>
<evidence type="ECO:0000255" key="1">
    <source>
        <dbReference type="HAMAP-Rule" id="MF_01685"/>
    </source>
</evidence>
<reference key="1">
    <citation type="submission" date="2006-01" db="EMBL/GenBank/DDBJ databases">
        <title>Complete sequence of Rhodopseudomonas palustris HaA2.</title>
        <authorList>
            <consortium name="US DOE Joint Genome Institute"/>
            <person name="Copeland A."/>
            <person name="Lucas S."/>
            <person name="Lapidus A."/>
            <person name="Barry K."/>
            <person name="Detter J.C."/>
            <person name="Glavina T."/>
            <person name="Hammon N."/>
            <person name="Israni S."/>
            <person name="Pitluck S."/>
            <person name="Chain P."/>
            <person name="Malfatti S."/>
            <person name="Shin M."/>
            <person name="Vergez L."/>
            <person name="Schmutz J."/>
            <person name="Larimer F."/>
            <person name="Land M."/>
            <person name="Hauser L."/>
            <person name="Pelletier D.A."/>
            <person name="Kyrpides N."/>
            <person name="Anderson I."/>
            <person name="Oda Y."/>
            <person name="Harwood C.S."/>
            <person name="Richardson P."/>
        </authorList>
    </citation>
    <scope>NUCLEOTIDE SEQUENCE [LARGE SCALE GENOMIC DNA]</scope>
    <source>
        <strain>HaA2</strain>
    </source>
</reference>
<feature type="chain" id="PRO_0000364917" description="Ferredoxin--NADP reductase">
    <location>
        <begin position="1"/>
        <end position="342"/>
    </location>
</feature>
<feature type="binding site" evidence="1">
    <location>
        <position position="17"/>
    </location>
    <ligand>
        <name>FAD</name>
        <dbReference type="ChEBI" id="CHEBI:57692"/>
    </ligand>
</feature>
<feature type="binding site" evidence="1">
    <location>
        <position position="36"/>
    </location>
    <ligand>
        <name>FAD</name>
        <dbReference type="ChEBI" id="CHEBI:57692"/>
    </ligand>
</feature>
<feature type="binding site" evidence="1">
    <location>
        <position position="44"/>
    </location>
    <ligand>
        <name>FAD</name>
        <dbReference type="ChEBI" id="CHEBI:57692"/>
    </ligand>
</feature>
<feature type="binding site" evidence="1">
    <location>
        <position position="49"/>
    </location>
    <ligand>
        <name>FAD</name>
        <dbReference type="ChEBI" id="CHEBI:57692"/>
    </ligand>
</feature>
<feature type="binding site" evidence="1">
    <location>
        <position position="89"/>
    </location>
    <ligand>
        <name>FAD</name>
        <dbReference type="ChEBI" id="CHEBI:57692"/>
    </ligand>
</feature>
<feature type="binding site" evidence="1">
    <location>
        <position position="124"/>
    </location>
    <ligand>
        <name>FAD</name>
        <dbReference type="ChEBI" id="CHEBI:57692"/>
    </ligand>
</feature>
<feature type="binding site" evidence="1">
    <location>
        <position position="289"/>
    </location>
    <ligand>
        <name>FAD</name>
        <dbReference type="ChEBI" id="CHEBI:57692"/>
    </ligand>
</feature>
<feature type="binding site" evidence="1">
    <location>
        <position position="330"/>
    </location>
    <ligand>
        <name>FAD</name>
        <dbReference type="ChEBI" id="CHEBI:57692"/>
    </ligand>
</feature>
<accession>Q2ITC6</accession>
<organism>
    <name type="scientific">Rhodopseudomonas palustris (strain HaA2)</name>
    <dbReference type="NCBI Taxonomy" id="316058"/>
    <lineage>
        <taxon>Bacteria</taxon>
        <taxon>Pseudomonadati</taxon>
        <taxon>Pseudomonadota</taxon>
        <taxon>Alphaproteobacteria</taxon>
        <taxon>Hyphomicrobiales</taxon>
        <taxon>Nitrobacteraceae</taxon>
        <taxon>Rhodopseudomonas</taxon>
    </lineage>
</organism>
<gene>
    <name type="ordered locus">RPB_3841</name>
</gene>
<proteinExistence type="inferred from homology"/>
<name>FENR_RHOP2</name>
<sequence length="342" mass="37139">MTETIKTDVLIVGAGPCGLFAVFELGLLDIKTHLVDILDKVGGQCAELYPEKPIYDIPGVPMITGHGLTEALMEQIKPFNPTIHLNEMIESVEKIGDPEFRVTTNAGTVFECKVLVVAAGGGSFQPKRPPVPGVEAYEGKSVHYAVRKMEEFRGKDIVIVGGGDSALDWTLNLNPICKSMTLVHRRDDFRGAPHSVEQMRQLVASGKLDLKIGQITELQGEDGQLSGATIKLNGNSIAQIKCDAMLPFFGLTMKLGPVANWGLQLENNLIPVDTGTFETNVPGIFAIGDINTYPGKLKLILSGFHEGALMAQKAVKYVYPDKRVVFQYTTSSTNLQKKLGVN</sequence>